<reference key="1">
    <citation type="journal article" date="1989" name="Nucleic Acids Res.">
        <title>The nucleotide sequence of Escherichia coli genes for L-fucose dissimilation.</title>
        <authorList>
            <person name="Lu Z."/>
            <person name="Lin E.C.C."/>
        </authorList>
    </citation>
    <scope>NUCLEOTIDE SEQUENCE [GENOMIC DNA]</scope>
    <source>
        <strain>K12</strain>
    </source>
</reference>
<reference key="2">
    <citation type="journal article" date="1997" name="Science">
        <title>The complete genome sequence of Escherichia coli K-12.</title>
        <authorList>
            <person name="Blattner F.R."/>
            <person name="Plunkett G. III"/>
            <person name="Bloch C.A."/>
            <person name="Perna N.T."/>
            <person name="Burland V."/>
            <person name="Riley M."/>
            <person name="Collado-Vides J."/>
            <person name="Glasner J.D."/>
            <person name="Rode C.K."/>
            <person name="Mayhew G.F."/>
            <person name="Gregor J."/>
            <person name="Davis N.W."/>
            <person name="Kirkpatrick H.A."/>
            <person name="Goeden M.A."/>
            <person name="Rose D.J."/>
            <person name="Mau B."/>
            <person name="Shao Y."/>
        </authorList>
    </citation>
    <scope>NUCLEOTIDE SEQUENCE [LARGE SCALE GENOMIC DNA]</scope>
    <source>
        <strain>K12 / MG1655 / ATCC 47076</strain>
    </source>
</reference>
<reference key="3">
    <citation type="journal article" date="2006" name="Mol. Syst. Biol.">
        <title>Highly accurate genome sequences of Escherichia coli K-12 strains MG1655 and W3110.</title>
        <authorList>
            <person name="Hayashi K."/>
            <person name="Morooka N."/>
            <person name="Yamamoto Y."/>
            <person name="Fujita K."/>
            <person name="Isono K."/>
            <person name="Choi S."/>
            <person name="Ohtsubo E."/>
            <person name="Baba T."/>
            <person name="Wanner B.L."/>
            <person name="Mori H."/>
            <person name="Horiuchi T."/>
        </authorList>
    </citation>
    <scope>NUCLEOTIDE SEQUENCE [LARGE SCALE GENOMIC DNA]</scope>
    <source>
        <strain>K12 / W3110 / ATCC 27325 / DSM 5911</strain>
    </source>
</reference>
<feature type="chain" id="PRO_0000050247" description="L-fucose operon activator">
    <location>
        <begin position="1"/>
        <end position="243"/>
    </location>
</feature>
<feature type="domain" description="HTH deoR-type" evidence="1">
    <location>
        <begin position="1"/>
        <end position="57"/>
    </location>
</feature>
<feature type="DNA-binding region" description="H-T-H motif" evidence="1">
    <location>
        <begin position="19"/>
        <end position="38"/>
    </location>
</feature>
<evidence type="ECO:0000255" key="1">
    <source>
        <dbReference type="PROSITE-ProRule" id="PRU00349"/>
    </source>
</evidence>
<proteinExistence type="predicted"/>
<protein>
    <recommendedName>
        <fullName>L-fucose operon activator</fullName>
    </recommendedName>
</protein>
<keyword id="KW-0010">Activator</keyword>
<keyword id="KW-0119">Carbohydrate metabolism</keyword>
<keyword id="KW-0238">DNA-binding</keyword>
<keyword id="KW-0294">Fucose metabolism</keyword>
<keyword id="KW-1185">Reference proteome</keyword>
<keyword id="KW-0804">Transcription</keyword>
<keyword id="KW-0805">Transcription regulation</keyword>
<dbReference type="EMBL" id="X15025">
    <property type="protein sequence ID" value="CAA33130.1"/>
    <property type="molecule type" value="Genomic_DNA"/>
</dbReference>
<dbReference type="EMBL" id="U29581">
    <property type="protein sequence ID" value="AAB40455.1"/>
    <property type="molecule type" value="Genomic_DNA"/>
</dbReference>
<dbReference type="EMBL" id="U00096">
    <property type="protein sequence ID" value="AAC75847.1"/>
    <property type="molecule type" value="Genomic_DNA"/>
</dbReference>
<dbReference type="EMBL" id="AP009048">
    <property type="protein sequence ID" value="BAE76877.1"/>
    <property type="molecule type" value="Genomic_DNA"/>
</dbReference>
<dbReference type="PIR" id="JS0188">
    <property type="entry name" value="RGECFO"/>
</dbReference>
<dbReference type="RefSeq" id="NP_417285.1">
    <property type="nucleotide sequence ID" value="NC_000913.3"/>
</dbReference>
<dbReference type="RefSeq" id="WP_000642344.1">
    <property type="nucleotide sequence ID" value="NZ_STEB01000030.1"/>
</dbReference>
<dbReference type="SMR" id="P0ACK8"/>
<dbReference type="BioGRID" id="4263538">
    <property type="interactions" value="105"/>
</dbReference>
<dbReference type="BioGRID" id="851244">
    <property type="interactions" value="1"/>
</dbReference>
<dbReference type="FunCoup" id="P0ACK8">
    <property type="interactions" value="35"/>
</dbReference>
<dbReference type="IntAct" id="P0ACK8">
    <property type="interactions" value="5"/>
</dbReference>
<dbReference type="STRING" id="511145.b2805"/>
<dbReference type="jPOST" id="P0ACK8"/>
<dbReference type="PaxDb" id="511145-b2805"/>
<dbReference type="EnsemblBacteria" id="AAC75847">
    <property type="protein sequence ID" value="AAC75847"/>
    <property type="gene ID" value="b2805"/>
</dbReference>
<dbReference type="GeneID" id="93779193"/>
<dbReference type="GeneID" id="946905"/>
<dbReference type="KEGG" id="ecj:JW2776"/>
<dbReference type="KEGG" id="eco:b2805"/>
<dbReference type="KEGG" id="ecoc:C3026_15420"/>
<dbReference type="PATRIC" id="fig|1411691.4.peg.3928"/>
<dbReference type="EchoBASE" id="EB0349"/>
<dbReference type="eggNOG" id="COG1349">
    <property type="taxonomic scope" value="Bacteria"/>
</dbReference>
<dbReference type="HOGENOM" id="CLU_060699_1_2_6"/>
<dbReference type="InParanoid" id="P0ACK8"/>
<dbReference type="OMA" id="LYKHSMV"/>
<dbReference type="OrthoDB" id="6846621at2"/>
<dbReference type="PhylomeDB" id="P0ACK8"/>
<dbReference type="BioCyc" id="EcoCyc:PD00444"/>
<dbReference type="PRO" id="PR:P0ACK8"/>
<dbReference type="Proteomes" id="UP000000625">
    <property type="component" value="Chromosome"/>
</dbReference>
<dbReference type="GO" id="GO:0000987">
    <property type="term" value="F:cis-regulatory region sequence-specific DNA binding"/>
    <property type="evidence" value="ECO:0000318"/>
    <property type="project" value="GO_Central"/>
</dbReference>
<dbReference type="GO" id="GO:0098531">
    <property type="term" value="F:ligand-modulated transcription factor activity"/>
    <property type="evidence" value="ECO:0000315"/>
    <property type="project" value="EcoCyc"/>
</dbReference>
<dbReference type="GO" id="GO:0006004">
    <property type="term" value="P:fucose metabolic process"/>
    <property type="evidence" value="ECO:0007669"/>
    <property type="project" value="UniProtKB-KW"/>
</dbReference>
<dbReference type="GO" id="GO:0006355">
    <property type="term" value="P:regulation of DNA-templated transcription"/>
    <property type="evidence" value="ECO:0000318"/>
    <property type="project" value="GO_Central"/>
</dbReference>
<dbReference type="GO" id="GO:0043468">
    <property type="term" value="P:regulation of fucose catabolic process"/>
    <property type="evidence" value="ECO:0000315"/>
    <property type="project" value="EcoCyc"/>
</dbReference>
<dbReference type="FunFam" id="3.40.50.1360:FF:000007">
    <property type="entry name" value="L-fucose operon activator"/>
    <property type="match status" value="1"/>
</dbReference>
<dbReference type="Gene3D" id="3.40.50.1360">
    <property type="match status" value="1"/>
</dbReference>
<dbReference type="Gene3D" id="1.10.10.10">
    <property type="entry name" value="Winged helix-like DNA-binding domain superfamily/Winged helix DNA-binding domain"/>
    <property type="match status" value="1"/>
</dbReference>
<dbReference type="InterPro" id="IPR050313">
    <property type="entry name" value="Carb_Metab_HTH_regulators"/>
</dbReference>
<dbReference type="InterPro" id="IPR014036">
    <property type="entry name" value="DeoR-like_C"/>
</dbReference>
<dbReference type="InterPro" id="IPR001034">
    <property type="entry name" value="DeoR_HTH"/>
</dbReference>
<dbReference type="InterPro" id="IPR037171">
    <property type="entry name" value="NagB/RpiA_transferase-like"/>
</dbReference>
<dbReference type="InterPro" id="IPR018356">
    <property type="entry name" value="Tscrpt_reg_HTH_DeoR_CS"/>
</dbReference>
<dbReference type="InterPro" id="IPR036388">
    <property type="entry name" value="WH-like_DNA-bd_sf"/>
</dbReference>
<dbReference type="InterPro" id="IPR036390">
    <property type="entry name" value="WH_DNA-bd_sf"/>
</dbReference>
<dbReference type="NCBIfam" id="NF007720">
    <property type="entry name" value="PRK10411.1"/>
    <property type="match status" value="1"/>
</dbReference>
<dbReference type="PANTHER" id="PTHR30363">
    <property type="entry name" value="HTH-TYPE TRANSCRIPTIONAL REGULATOR SRLR-RELATED"/>
    <property type="match status" value="1"/>
</dbReference>
<dbReference type="PANTHER" id="PTHR30363:SF49">
    <property type="entry name" value="L-FUCOSE OPERON ACTIVATOR"/>
    <property type="match status" value="1"/>
</dbReference>
<dbReference type="Pfam" id="PF00455">
    <property type="entry name" value="DeoRC"/>
    <property type="match status" value="1"/>
</dbReference>
<dbReference type="Pfam" id="PF08220">
    <property type="entry name" value="HTH_DeoR"/>
    <property type="match status" value="1"/>
</dbReference>
<dbReference type="PRINTS" id="PR00037">
    <property type="entry name" value="HTHLACR"/>
</dbReference>
<dbReference type="SMART" id="SM01134">
    <property type="entry name" value="DeoRC"/>
    <property type="match status" value="1"/>
</dbReference>
<dbReference type="SMART" id="SM00420">
    <property type="entry name" value="HTH_DEOR"/>
    <property type="match status" value="1"/>
</dbReference>
<dbReference type="SUPFAM" id="SSF100950">
    <property type="entry name" value="NagB/RpiA/CoA transferase-like"/>
    <property type="match status" value="1"/>
</dbReference>
<dbReference type="SUPFAM" id="SSF46785">
    <property type="entry name" value="Winged helix' DNA-binding domain"/>
    <property type="match status" value="1"/>
</dbReference>
<dbReference type="PROSITE" id="PS00894">
    <property type="entry name" value="HTH_DEOR_1"/>
    <property type="match status" value="1"/>
</dbReference>
<dbReference type="PROSITE" id="PS51000">
    <property type="entry name" value="HTH_DEOR_2"/>
    <property type="match status" value="1"/>
</dbReference>
<organism>
    <name type="scientific">Escherichia coli (strain K12)</name>
    <dbReference type="NCBI Taxonomy" id="83333"/>
    <lineage>
        <taxon>Bacteria</taxon>
        <taxon>Pseudomonadati</taxon>
        <taxon>Pseudomonadota</taxon>
        <taxon>Gammaproteobacteria</taxon>
        <taxon>Enterobacterales</taxon>
        <taxon>Enterobacteriaceae</taxon>
        <taxon>Escherichia</taxon>
    </lineage>
</organism>
<gene>
    <name type="primary">fucR</name>
    <name type="ordered locus">b2805</name>
    <name type="ordered locus">JW2776</name>
</gene>
<name>FUCR_ECOLI</name>
<comment type="function">
    <text>Transcriptional activator of the fuc operon.</text>
</comment>
<accession>P0ACK8</accession>
<accession>P11554</accession>
<accession>Q2MA29</accession>
<sequence length="243" mass="27362">MKAARQQAIVDLLLNHTSLTTEALSEQLKVSKETIRRDLNELQTQGKILRNHGRAKYIHRQNQDSGDPFHIRLKSHYAHKADIAREALAWIEEGMVIALDASSTCWYLARQLPDINIQVFTNSHPICHELGKRERIQLISSGGTLERKYGCYVNPSLISQLKSLEIDLFIFSCEGIDSSGALWDSNAINADYKSMLLKRAAQSLLLIDKSKFNRSGEARIGHLDEVTHIISDERQVATSLVTA</sequence>